<evidence type="ECO:0000255" key="1">
    <source>
        <dbReference type="HAMAP-Rule" id="MF_00201"/>
    </source>
</evidence>
<feature type="chain" id="PRO_1000099389" description="DNA repair protein RecO">
    <location>
        <begin position="1"/>
        <end position="246"/>
    </location>
</feature>
<dbReference type="EMBL" id="CP000908">
    <property type="protein sequence ID" value="ABY29456.1"/>
    <property type="molecule type" value="Genomic_DNA"/>
</dbReference>
<dbReference type="RefSeq" id="WP_003600461.1">
    <property type="nucleotide sequence ID" value="NC_010172.1"/>
</dbReference>
<dbReference type="SMR" id="A9W1K0"/>
<dbReference type="KEGG" id="mex:Mext_1051"/>
<dbReference type="eggNOG" id="COG1381">
    <property type="taxonomic scope" value="Bacteria"/>
</dbReference>
<dbReference type="HOGENOM" id="CLU_086029_0_0_5"/>
<dbReference type="BioCyc" id="MEXT419610:MEXT_RS05285-MONOMER"/>
<dbReference type="GO" id="GO:0043590">
    <property type="term" value="C:bacterial nucleoid"/>
    <property type="evidence" value="ECO:0007669"/>
    <property type="project" value="TreeGrafter"/>
</dbReference>
<dbReference type="GO" id="GO:0006310">
    <property type="term" value="P:DNA recombination"/>
    <property type="evidence" value="ECO:0007669"/>
    <property type="project" value="UniProtKB-UniRule"/>
</dbReference>
<dbReference type="GO" id="GO:0006302">
    <property type="term" value="P:double-strand break repair"/>
    <property type="evidence" value="ECO:0007669"/>
    <property type="project" value="TreeGrafter"/>
</dbReference>
<dbReference type="Gene3D" id="2.40.50.140">
    <property type="entry name" value="Nucleic acid-binding proteins"/>
    <property type="match status" value="1"/>
</dbReference>
<dbReference type="Gene3D" id="1.20.1440.120">
    <property type="entry name" value="Recombination protein O, C-terminal domain"/>
    <property type="match status" value="1"/>
</dbReference>
<dbReference type="HAMAP" id="MF_00201">
    <property type="entry name" value="RecO"/>
    <property type="match status" value="1"/>
</dbReference>
<dbReference type="InterPro" id="IPR037278">
    <property type="entry name" value="ARFGAP/RecO"/>
</dbReference>
<dbReference type="InterPro" id="IPR022572">
    <property type="entry name" value="DNA_rep/recomb_RecO_N"/>
</dbReference>
<dbReference type="InterPro" id="IPR012340">
    <property type="entry name" value="NA-bd_OB-fold"/>
</dbReference>
<dbReference type="InterPro" id="IPR003717">
    <property type="entry name" value="RecO"/>
</dbReference>
<dbReference type="InterPro" id="IPR042242">
    <property type="entry name" value="RecO_C"/>
</dbReference>
<dbReference type="NCBIfam" id="TIGR00613">
    <property type="entry name" value="reco"/>
    <property type="match status" value="1"/>
</dbReference>
<dbReference type="PANTHER" id="PTHR33991">
    <property type="entry name" value="DNA REPAIR PROTEIN RECO"/>
    <property type="match status" value="1"/>
</dbReference>
<dbReference type="PANTHER" id="PTHR33991:SF1">
    <property type="entry name" value="DNA REPAIR PROTEIN RECO"/>
    <property type="match status" value="1"/>
</dbReference>
<dbReference type="Pfam" id="PF02565">
    <property type="entry name" value="RecO_C"/>
    <property type="match status" value="1"/>
</dbReference>
<dbReference type="Pfam" id="PF11967">
    <property type="entry name" value="RecO_N"/>
    <property type="match status" value="1"/>
</dbReference>
<dbReference type="SUPFAM" id="SSF57863">
    <property type="entry name" value="ArfGap/RecO-like zinc finger"/>
    <property type="match status" value="1"/>
</dbReference>
<dbReference type="SUPFAM" id="SSF50249">
    <property type="entry name" value="Nucleic acid-binding proteins"/>
    <property type="match status" value="1"/>
</dbReference>
<comment type="function">
    <text evidence="1">Involved in DNA repair and RecF pathway recombination.</text>
</comment>
<comment type="similarity">
    <text evidence="1">Belongs to the RecO family.</text>
</comment>
<proteinExistence type="inferred from homology"/>
<keyword id="KW-0227">DNA damage</keyword>
<keyword id="KW-0233">DNA recombination</keyword>
<keyword id="KW-0234">DNA repair</keyword>
<gene>
    <name evidence="1" type="primary">recO</name>
    <name type="ordered locus">Mext_1051</name>
</gene>
<protein>
    <recommendedName>
        <fullName evidence="1">DNA repair protein RecO</fullName>
    </recommendedName>
    <alternativeName>
        <fullName evidence="1">Recombination protein O</fullName>
    </alternativeName>
</protein>
<organism>
    <name type="scientific">Methylorubrum extorquens (strain PA1)</name>
    <name type="common">Methylobacterium extorquens</name>
    <dbReference type="NCBI Taxonomy" id="419610"/>
    <lineage>
        <taxon>Bacteria</taxon>
        <taxon>Pseudomonadati</taxon>
        <taxon>Pseudomonadota</taxon>
        <taxon>Alphaproteobacteria</taxon>
        <taxon>Hyphomicrobiales</taxon>
        <taxon>Methylobacteriaceae</taxon>
        <taxon>Methylorubrum</taxon>
    </lineage>
</organism>
<sequence length="246" mass="26897">MQWIDDGLVIGLRKHGETGVVLELMTPEHGRHLGLVHGGRSRRMQPMLQPGNTLRATWRARLDGALGAYAVEPLTLNASRLMDSGLALYGVAHLSALLRLLPERDPHPALYEAAQILIAHLDDPEIAPALMVRFELALLAGLGFGLDLSHCAATGANDALVYVSPKSGRAVSASAGEPFRDRLLPLPPFLRDRDQPGSGWRTPDTHDVREGFTLTGYFLDQHVWRPRAQDTPEERARFVALGTGQS</sequence>
<accession>A9W1K0</accession>
<name>RECO_METEP</name>
<reference key="1">
    <citation type="submission" date="2007-12" db="EMBL/GenBank/DDBJ databases">
        <title>Complete sequence of Methylobacterium extorquens PA1.</title>
        <authorList>
            <consortium name="US DOE Joint Genome Institute"/>
            <person name="Copeland A."/>
            <person name="Lucas S."/>
            <person name="Lapidus A."/>
            <person name="Barry K."/>
            <person name="Glavina del Rio T."/>
            <person name="Dalin E."/>
            <person name="Tice H."/>
            <person name="Pitluck S."/>
            <person name="Saunders E."/>
            <person name="Brettin T."/>
            <person name="Bruce D."/>
            <person name="Detter J.C."/>
            <person name="Han C."/>
            <person name="Schmutz J."/>
            <person name="Larimer F."/>
            <person name="Land M."/>
            <person name="Hauser L."/>
            <person name="Kyrpides N."/>
            <person name="Kim E."/>
            <person name="Marx C."/>
            <person name="Richardson P."/>
        </authorList>
    </citation>
    <scope>NUCLEOTIDE SEQUENCE [LARGE SCALE GENOMIC DNA]</scope>
    <source>
        <strain>PA1</strain>
    </source>
</reference>